<protein>
    <recommendedName>
        <fullName>Eukaryotic initiation factor 4A-III</fullName>
        <shortName>eIF-4A-III</shortName>
        <shortName>eIF4A-III</shortName>
        <ecNumber evidence="1">3.6.4.13</ecNumber>
    </recommendedName>
    <alternativeName>
        <fullName>ATP-dependent RNA helicase DDX48</fullName>
    </alternativeName>
    <alternativeName>
        <fullName>ATP-dependent RNA helicase eIF4A-3</fullName>
    </alternativeName>
    <alternativeName>
        <fullName>DEAD box protein 48</fullName>
    </alternativeName>
    <alternativeName>
        <fullName>Eukaryotic translation initiation factor 4A isoform 3</fullName>
    </alternativeName>
    <component>
        <recommendedName>
            <fullName>Eukaryotic initiation factor 4A-III, N-terminally processed</fullName>
        </recommendedName>
    </component>
</protein>
<name>IF4A3_RAT</name>
<gene>
    <name type="primary">Eif4a3</name>
    <name type="synonym">Ddx48</name>
</gene>
<feature type="chain" id="PRO_0000423271" description="Eukaryotic initiation factor 4A-III">
    <location>
        <begin position="1"/>
        <end position="411"/>
    </location>
</feature>
<feature type="initiator methionine" description="Removed; alternate" evidence="1">
    <location>
        <position position="1"/>
    </location>
</feature>
<feature type="chain" id="PRO_0000378555" description="Eukaryotic initiation factor 4A-III, N-terminally processed">
    <location>
        <begin position="2"/>
        <end position="411"/>
    </location>
</feature>
<feature type="domain" description="Helicase ATP-binding" evidence="4">
    <location>
        <begin position="69"/>
        <end position="239"/>
    </location>
</feature>
<feature type="domain" description="Helicase C-terminal" evidence="5">
    <location>
        <begin position="250"/>
        <end position="411"/>
    </location>
</feature>
<feature type="short sequence motif" description="Q motif">
    <location>
        <begin position="38"/>
        <end position="66"/>
    </location>
</feature>
<feature type="short sequence motif" description="DEAD box" evidence="7">
    <location>
        <begin position="187"/>
        <end position="190"/>
    </location>
</feature>
<feature type="binding site" evidence="1">
    <location>
        <position position="60"/>
    </location>
    <ligand>
        <name>ATP</name>
        <dbReference type="ChEBI" id="CHEBI:30616"/>
    </ligand>
</feature>
<feature type="binding site" evidence="1">
    <location>
        <position position="65"/>
    </location>
    <ligand>
        <name>ATP</name>
        <dbReference type="ChEBI" id="CHEBI:30616"/>
    </ligand>
</feature>
<feature type="binding site" evidence="4">
    <location>
        <begin position="85"/>
        <end position="90"/>
    </location>
    <ligand>
        <name>ATP</name>
        <dbReference type="ChEBI" id="CHEBI:30616"/>
    </ligand>
</feature>
<feature type="binding site" evidence="1">
    <location>
        <position position="342"/>
    </location>
    <ligand>
        <name>ATP</name>
        <dbReference type="ChEBI" id="CHEBI:30616"/>
    </ligand>
</feature>
<feature type="binding site" evidence="4">
    <location>
        <begin position="367"/>
        <end position="371"/>
    </location>
    <ligand>
        <name>ATP</name>
        <dbReference type="ChEBI" id="CHEBI:30616"/>
    </ligand>
</feature>
<feature type="modified residue" description="N-acetylmethionine" evidence="1">
    <location>
        <position position="1"/>
    </location>
</feature>
<feature type="modified residue" description="N-acetylalanine; in Eukaryotic initiation factor 4A-III, N-terminally processed" evidence="1">
    <location>
        <position position="2"/>
    </location>
</feature>
<feature type="modified residue" description="Phosphoserine" evidence="2">
    <location>
        <position position="10"/>
    </location>
</feature>
<feature type="modified residue" description="Phosphoserine" evidence="1">
    <location>
        <position position="12"/>
    </location>
</feature>
<feature type="modified residue" description="N6-acetyllysine" evidence="2">
    <location>
        <position position="124"/>
    </location>
</feature>
<feature type="modified residue" description="Phosphothreonine" evidence="1">
    <location>
        <position position="163"/>
    </location>
</feature>
<feature type="modified residue" description="N6-acetyllysine" evidence="3">
    <location>
        <position position="198"/>
    </location>
</feature>
<feature type="modified residue" description="N6-acetyllysine" evidence="1">
    <location>
        <position position="296"/>
    </location>
</feature>
<feature type="modified residue" description="N6-acetyllysine" evidence="1">
    <location>
        <position position="321"/>
    </location>
</feature>
<feature type="cross-link" description="Glycyl lysine isopeptide (Lys-Gly) (interchain with G-Cter in SUMO2)" evidence="1">
    <location>
        <position position="19"/>
    </location>
</feature>
<feature type="cross-link" description="Glycyl lysine isopeptide (Lys-Gly) (interchain with G-Cter in SUMO2)" evidence="2">
    <location>
        <position position="152"/>
    </location>
</feature>
<feature type="cross-link" description="Glycyl lysine isopeptide (Lys-Gly) (interchain with G-Cter in SUMO2)" evidence="1">
    <location>
        <position position="314"/>
    </location>
</feature>
<feature type="cross-link" description="Glycyl lysine isopeptide (Lys-Gly) (interchain with G-Cter in SUMO2)" evidence="2">
    <location>
        <position position="374"/>
    </location>
</feature>
<feature type="cross-link" description="Glycyl lysine isopeptide (Lys-Gly) (interchain with G-Cter in SUMO2)" evidence="1">
    <location>
        <position position="382"/>
    </location>
</feature>
<organism>
    <name type="scientific">Rattus norvegicus</name>
    <name type="common">Rat</name>
    <dbReference type="NCBI Taxonomy" id="10116"/>
    <lineage>
        <taxon>Eukaryota</taxon>
        <taxon>Metazoa</taxon>
        <taxon>Chordata</taxon>
        <taxon>Craniata</taxon>
        <taxon>Vertebrata</taxon>
        <taxon>Euteleostomi</taxon>
        <taxon>Mammalia</taxon>
        <taxon>Eutheria</taxon>
        <taxon>Euarchontoglires</taxon>
        <taxon>Glires</taxon>
        <taxon>Rodentia</taxon>
        <taxon>Myomorpha</taxon>
        <taxon>Muroidea</taxon>
        <taxon>Muridae</taxon>
        <taxon>Murinae</taxon>
        <taxon>Rattus</taxon>
    </lineage>
</organism>
<dbReference type="EC" id="3.6.4.13" evidence="1"/>
<dbReference type="EMBL" id="BC105875">
    <property type="protein sequence ID" value="AAI05876.1"/>
    <property type="molecule type" value="mRNA"/>
</dbReference>
<dbReference type="EMBL" id="CH473948">
    <property type="protein sequence ID" value="EDM06783.1"/>
    <property type="molecule type" value="Genomic_DNA"/>
</dbReference>
<dbReference type="RefSeq" id="NP_001093628.1">
    <property type="nucleotide sequence ID" value="NM_001100158.2"/>
</dbReference>
<dbReference type="SMR" id="Q3B8Q2"/>
<dbReference type="BioGRID" id="603119">
    <property type="interactions" value="2"/>
</dbReference>
<dbReference type="FunCoup" id="Q3B8Q2">
    <property type="interactions" value="3833"/>
</dbReference>
<dbReference type="IntAct" id="Q3B8Q2">
    <property type="interactions" value="1"/>
</dbReference>
<dbReference type="STRING" id="10116.ENSRNOP00000066302"/>
<dbReference type="GlyGen" id="Q3B8Q2">
    <property type="glycosylation" value="1 site"/>
</dbReference>
<dbReference type="iPTMnet" id="Q3B8Q2"/>
<dbReference type="PhosphoSitePlus" id="Q3B8Q2"/>
<dbReference type="jPOST" id="Q3B8Q2"/>
<dbReference type="PaxDb" id="10116-ENSRNOP00000066302"/>
<dbReference type="Ensembl" id="ENSRNOT00000073140.3">
    <property type="protein sequence ID" value="ENSRNOP00000066302.1"/>
    <property type="gene ID" value="ENSRNOG00000045791.3"/>
</dbReference>
<dbReference type="GeneID" id="688288"/>
<dbReference type="KEGG" id="rno:688288"/>
<dbReference type="AGR" id="RGD:1591139"/>
<dbReference type="CTD" id="9775"/>
<dbReference type="RGD" id="1591139">
    <property type="gene designation" value="Eif4a3"/>
</dbReference>
<dbReference type="eggNOG" id="KOG0328">
    <property type="taxonomic scope" value="Eukaryota"/>
</dbReference>
<dbReference type="GeneTree" id="ENSGT00940000155037"/>
<dbReference type="HOGENOM" id="CLU_003041_1_0_1"/>
<dbReference type="InParanoid" id="Q3B8Q2"/>
<dbReference type="OMA" id="TRFHDFK"/>
<dbReference type="OrthoDB" id="10265785at2759"/>
<dbReference type="PhylomeDB" id="Q3B8Q2"/>
<dbReference type="Reactome" id="R-RNO-1169408">
    <property type="pathway name" value="ISG15 antiviral mechanism"/>
</dbReference>
<dbReference type="Reactome" id="R-RNO-159236">
    <property type="pathway name" value="Transport of Mature mRNA derived from an Intron-Containing Transcript"/>
</dbReference>
<dbReference type="Reactome" id="R-RNO-429947">
    <property type="pathway name" value="Deadenylation of mRNA"/>
</dbReference>
<dbReference type="Reactome" id="R-RNO-72163">
    <property type="pathway name" value="mRNA Splicing - Major Pathway"/>
</dbReference>
<dbReference type="Reactome" id="R-RNO-72187">
    <property type="pathway name" value="mRNA 3'-end processing"/>
</dbReference>
<dbReference type="Reactome" id="R-RNO-73856">
    <property type="pathway name" value="RNA Polymerase II Transcription Termination"/>
</dbReference>
<dbReference type="Reactome" id="R-RNO-975957">
    <property type="pathway name" value="Nonsense Mediated Decay (NMD) enhanced by the Exon Junction Complex (EJC)"/>
</dbReference>
<dbReference type="PRO" id="PR:Q3B8Q2"/>
<dbReference type="Proteomes" id="UP000002494">
    <property type="component" value="Chromosome 10"/>
</dbReference>
<dbReference type="Proteomes" id="UP000234681">
    <property type="component" value="Chromosome 10"/>
</dbReference>
<dbReference type="Bgee" id="ENSRNOG00000045791">
    <property type="expression patterns" value="Expressed in thymus and 20 other cell types or tissues"/>
</dbReference>
<dbReference type="GO" id="GO:0071013">
    <property type="term" value="C:catalytic step 2 spliceosome"/>
    <property type="evidence" value="ECO:0000266"/>
    <property type="project" value="RGD"/>
</dbReference>
<dbReference type="GO" id="GO:0005737">
    <property type="term" value="C:cytoplasm"/>
    <property type="evidence" value="ECO:0000266"/>
    <property type="project" value="RGD"/>
</dbReference>
<dbReference type="GO" id="GO:0030425">
    <property type="term" value="C:dendrite"/>
    <property type="evidence" value="ECO:0000314"/>
    <property type="project" value="RGD"/>
</dbReference>
<dbReference type="GO" id="GO:0035145">
    <property type="term" value="C:exon-exon junction complex"/>
    <property type="evidence" value="ECO:0000266"/>
    <property type="project" value="RGD"/>
</dbReference>
<dbReference type="GO" id="GO:0098978">
    <property type="term" value="C:glutamatergic synapse"/>
    <property type="evidence" value="ECO:0000314"/>
    <property type="project" value="SynGO"/>
</dbReference>
<dbReference type="GO" id="GO:0043025">
    <property type="term" value="C:neuronal cell body"/>
    <property type="evidence" value="ECO:0000314"/>
    <property type="project" value="RGD"/>
</dbReference>
<dbReference type="GO" id="GO:0016607">
    <property type="term" value="C:nuclear speck"/>
    <property type="evidence" value="ECO:0007669"/>
    <property type="project" value="UniProtKB-SubCell"/>
</dbReference>
<dbReference type="GO" id="GO:0005730">
    <property type="term" value="C:nucleolus"/>
    <property type="evidence" value="ECO:0000318"/>
    <property type="project" value="GO_Central"/>
</dbReference>
<dbReference type="GO" id="GO:0005634">
    <property type="term" value="C:nucleus"/>
    <property type="evidence" value="ECO:0000314"/>
    <property type="project" value="RGD"/>
</dbReference>
<dbReference type="GO" id="GO:0098794">
    <property type="term" value="C:postsynapse"/>
    <property type="evidence" value="ECO:0007669"/>
    <property type="project" value="GOC"/>
</dbReference>
<dbReference type="GO" id="GO:1990904">
    <property type="term" value="C:ribonucleoprotein complex"/>
    <property type="evidence" value="ECO:0000314"/>
    <property type="project" value="RGD"/>
</dbReference>
<dbReference type="GO" id="GO:0071006">
    <property type="term" value="C:U2-type catalytic step 1 spliceosome"/>
    <property type="evidence" value="ECO:0000250"/>
    <property type="project" value="UniProtKB"/>
</dbReference>
<dbReference type="GO" id="GO:0005524">
    <property type="term" value="F:ATP binding"/>
    <property type="evidence" value="ECO:0000266"/>
    <property type="project" value="RGD"/>
</dbReference>
<dbReference type="GO" id="GO:0016887">
    <property type="term" value="F:ATP hydrolysis activity"/>
    <property type="evidence" value="ECO:0007669"/>
    <property type="project" value="RHEA"/>
</dbReference>
<dbReference type="GO" id="GO:0003729">
    <property type="term" value="F:mRNA binding"/>
    <property type="evidence" value="ECO:0000266"/>
    <property type="project" value="RGD"/>
</dbReference>
<dbReference type="GO" id="GO:0008143">
    <property type="term" value="F:poly(A) binding"/>
    <property type="evidence" value="ECO:0000266"/>
    <property type="project" value="RGD"/>
</dbReference>
<dbReference type="GO" id="GO:0043021">
    <property type="term" value="F:ribonucleoprotein complex binding"/>
    <property type="evidence" value="ECO:0000314"/>
    <property type="project" value="RGD"/>
</dbReference>
<dbReference type="GO" id="GO:0003724">
    <property type="term" value="F:RNA helicase activity"/>
    <property type="evidence" value="ECO:0000266"/>
    <property type="project" value="RGD"/>
</dbReference>
<dbReference type="GO" id="GO:0035613">
    <property type="term" value="F:RNA stem-loop binding"/>
    <property type="evidence" value="ECO:0000314"/>
    <property type="project" value="RGD"/>
</dbReference>
<dbReference type="GO" id="GO:0035368">
    <property type="term" value="F:selenocysteine insertion sequence binding"/>
    <property type="evidence" value="ECO:0000314"/>
    <property type="project" value="RGD"/>
</dbReference>
<dbReference type="GO" id="GO:0008306">
    <property type="term" value="P:associative learning"/>
    <property type="evidence" value="ECO:0000270"/>
    <property type="project" value="RGD"/>
</dbReference>
<dbReference type="GO" id="GO:1990416">
    <property type="term" value="P:cellular response to brain-derived neurotrophic factor stimulus"/>
    <property type="evidence" value="ECO:0000270"/>
    <property type="project" value="RGD"/>
</dbReference>
<dbReference type="GO" id="GO:0072715">
    <property type="term" value="P:cellular response to selenite ion"/>
    <property type="evidence" value="ECO:0000270"/>
    <property type="project" value="RGD"/>
</dbReference>
<dbReference type="GO" id="GO:0048701">
    <property type="term" value="P:embryonic cranial skeleton morphogenesis"/>
    <property type="evidence" value="ECO:0000250"/>
    <property type="project" value="UniProtKB"/>
</dbReference>
<dbReference type="GO" id="GO:0035640">
    <property type="term" value="P:exploration behavior"/>
    <property type="evidence" value="ECO:0000270"/>
    <property type="project" value="RGD"/>
</dbReference>
<dbReference type="GO" id="GO:0000398">
    <property type="term" value="P:mRNA splicing, via spliceosome"/>
    <property type="evidence" value="ECO:0000250"/>
    <property type="project" value="UniProtKB"/>
</dbReference>
<dbReference type="GO" id="GO:0051028">
    <property type="term" value="P:mRNA transport"/>
    <property type="evidence" value="ECO:0007669"/>
    <property type="project" value="UniProtKB-KW"/>
</dbReference>
<dbReference type="GO" id="GO:0090394">
    <property type="term" value="P:negative regulation of excitatory postsynaptic potential"/>
    <property type="evidence" value="ECO:0000315"/>
    <property type="project" value="RGD"/>
</dbReference>
<dbReference type="GO" id="GO:0010629">
    <property type="term" value="P:negative regulation of gene expression"/>
    <property type="evidence" value="ECO:0000315"/>
    <property type="project" value="RGD"/>
</dbReference>
<dbReference type="GO" id="GO:1904570">
    <property type="term" value="P:negative regulation of selenocysteine incorporation"/>
    <property type="evidence" value="ECO:0000314"/>
    <property type="project" value="RGD"/>
</dbReference>
<dbReference type="GO" id="GO:0017148">
    <property type="term" value="P:negative regulation of translation"/>
    <property type="evidence" value="ECO:0000266"/>
    <property type="project" value="RGD"/>
</dbReference>
<dbReference type="GO" id="GO:0000184">
    <property type="term" value="P:nuclear-transcribed mRNA catabolic process, nonsense-mediated decay"/>
    <property type="evidence" value="ECO:0000266"/>
    <property type="project" value="RGD"/>
</dbReference>
<dbReference type="GO" id="GO:0048026">
    <property type="term" value="P:positive regulation of mRNA splicing, via spliceosome"/>
    <property type="evidence" value="ECO:0000266"/>
    <property type="project" value="RGD"/>
</dbReference>
<dbReference type="GO" id="GO:0045944">
    <property type="term" value="P:positive regulation of transcription by RNA polymerase II"/>
    <property type="evidence" value="ECO:0000266"/>
    <property type="project" value="RGD"/>
</dbReference>
<dbReference type="GO" id="GO:0045727">
    <property type="term" value="P:positive regulation of translation"/>
    <property type="evidence" value="ECO:0000266"/>
    <property type="project" value="RGD"/>
</dbReference>
<dbReference type="GO" id="GO:0000381">
    <property type="term" value="P:regulation of alternative mRNA splicing, via spliceosome"/>
    <property type="evidence" value="ECO:0000250"/>
    <property type="project" value="UniProtKB"/>
</dbReference>
<dbReference type="GO" id="GO:2000622">
    <property type="term" value="P:regulation of nuclear-transcribed mRNA catabolic process, nonsense-mediated decay"/>
    <property type="evidence" value="ECO:0000266"/>
    <property type="project" value="RGD"/>
</dbReference>
<dbReference type="GO" id="GO:0099578">
    <property type="term" value="P:regulation of translation at postsynapse, modulating synaptic transmission"/>
    <property type="evidence" value="ECO:0000314"/>
    <property type="project" value="SynGO"/>
</dbReference>
<dbReference type="GO" id="GO:0006364">
    <property type="term" value="P:rRNA processing"/>
    <property type="evidence" value="ECO:0007669"/>
    <property type="project" value="UniProtKB-KW"/>
</dbReference>
<dbReference type="CDD" id="cd18045">
    <property type="entry name" value="DEADc_EIF4AIII_DDX48"/>
    <property type="match status" value="1"/>
</dbReference>
<dbReference type="CDD" id="cd18787">
    <property type="entry name" value="SF2_C_DEAD"/>
    <property type="match status" value="1"/>
</dbReference>
<dbReference type="FunFam" id="3.40.50.300:FF:000031">
    <property type="entry name" value="Eukaryotic initiation factor 4A-III"/>
    <property type="match status" value="1"/>
</dbReference>
<dbReference type="FunFam" id="3.40.50.300:FF:000498">
    <property type="entry name" value="Eukaryotic initiation factor 4A-III"/>
    <property type="match status" value="1"/>
</dbReference>
<dbReference type="Gene3D" id="3.40.50.300">
    <property type="entry name" value="P-loop containing nucleotide triphosphate hydrolases"/>
    <property type="match status" value="2"/>
</dbReference>
<dbReference type="InterPro" id="IPR011545">
    <property type="entry name" value="DEAD/DEAH_box_helicase_dom"/>
</dbReference>
<dbReference type="InterPro" id="IPR014001">
    <property type="entry name" value="Helicase_ATP-bd"/>
</dbReference>
<dbReference type="InterPro" id="IPR001650">
    <property type="entry name" value="Helicase_C-like"/>
</dbReference>
<dbReference type="InterPro" id="IPR027417">
    <property type="entry name" value="P-loop_NTPase"/>
</dbReference>
<dbReference type="InterPro" id="IPR000629">
    <property type="entry name" value="RNA-helicase_DEAD-box_CS"/>
</dbReference>
<dbReference type="InterPro" id="IPR014014">
    <property type="entry name" value="RNA_helicase_DEAD_Q_motif"/>
</dbReference>
<dbReference type="PANTHER" id="PTHR47958">
    <property type="entry name" value="ATP-DEPENDENT RNA HELICASE DBP3"/>
    <property type="match status" value="1"/>
</dbReference>
<dbReference type="Pfam" id="PF00270">
    <property type="entry name" value="DEAD"/>
    <property type="match status" value="1"/>
</dbReference>
<dbReference type="Pfam" id="PF00271">
    <property type="entry name" value="Helicase_C"/>
    <property type="match status" value="1"/>
</dbReference>
<dbReference type="SMART" id="SM00487">
    <property type="entry name" value="DEXDc"/>
    <property type="match status" value="1"/>
</dbReference>
<dbReference type="SMART" id="SM00490">
    <property type="entry name" value="HELICc"/>
    <property type="match status" value="1"/>
</dbReference>
<dbReference type="SUPFAM" id="SSF52540">
    <property type="entry name" value="P-loop containing nucleoside triphosphate hydrolases"/>
    <property type="match status" value="1"/>
</dbReference>
<dbReference type="PROSITE" id="PS00039">
    <property type="entry name" value="DEAD_ATP_HELICASE"/>
    <property type="match status" value="1"/>
</dbReference>
<dbReference type="PROSITE" id="PS51192">
    <property type="entry name" value="HELICASE_ATP_BIND_1"/>
    <property type="match status" value="1"/>
</dbReference>
<dbReference type="PROSITE" id="PS51194">
    <property type="entry name" value="HELICASE_CTER"/>
    <property type="match status" value="1"/>
</dbReference>
<dbReference type="PROSITE" id="PS51195">
    <property type="entry name" value="Q_MOTIF"/>
    <property type="match status" value="1"/>
</dbReference>
<keyword id="KW-0007">Acetylation</keyword>
<keyword id="KW-0067">ATP-binding</keyword>
<keyword id="KW-0963">Cytoplasm</keyword>
<keyword id="KW-0347">Helicase</keyword>
<keyword id="KW-0378">Hydrolase</keyword>
<keyword id="KW-1017">Isopeptide bond</keyword>
<keyword id="KW-0507">mRNA processing</keyword>
<keyword id="KW-0508">mRNA splicing</keyword>
<keyword id="KW-0509">mRNA transport</keyword>
<keyword id="KW-0866">Nonsense-mediated mRNA decay</keyword>
<keyword id="KW-0547">Nucleotide-binding</keyword>
<keyword id="KW-0539">Nucleus</keyword>
<keyword id="KW-0597">Phosphoprotein</keyword>
<keyword id="KW-1185">Reference proteome</keyword>
<keyword id="KW-0694">RNA-binding</keyword>
<keyword id="KW-0698">rRNA processing</keyword>
<keyword id="KW-0747">Spliceosome</keyword>
<keyword id="KW-0810">Translation regulation</keyword>
<keyword id="KW-0813">Transport</keyword>
<keyword id="KW-0832">Ubl conjugation</keyword>
<comment type="function">
    <text evidence="1">ATP-dependent RNA helicase. Involved in pre-mRNA splicing as component of the spliceosome. Core component of the splicing-dependent multiprotein exon junction complex (EJC) deposited at splice junctions on mRNAs. The EJC is a dynamic structure consisting of core proteins and several peripheral nuclear and cytoplasmic associated factors that join the complex only transiently either during EJC assembly or during subsequent mRNA metabolism. The EJC marks the position of the exon-exon junction in the mature mRNA for the gene expression machinery and the core components remain bound to spliced mRNAs throughout all stages of mRNA metabolism thereby influencing downstream processes including nuclear mRNA export, subcellular mRNA localization, translation efficiency and nonsense-mediated mRNA decay (NMD). Its RNA-dependent ATPase and RNA-helicase activities are induced by CASC3, but abolished in presence of the MAGOH-RBM8A heterodimer, thereby trapping the ATP-bound EJC core onto spliced mRNA in a stable conformation. The inhibition of ATPase activity by the MAGOH-RBM8A heterodimer increases the RNA-binding affinity of the EJC. Involved in translational enhancement of spliced mRNAs after formation of the 80S ribosome complex. Binds spliced mRNA in sequence-independent manner, 20-24 nucleotides upstream of mRNA exon-exon junctions. Shows higher affinity for single-stranded RNA in an ATP-bound core EJC complex than after the ATP is hydrolyzed. Involved in the splicing modulation of BCL2L1/Bcl-X (and probably other apoptotic genes); specifically inhibits formation of proapoptotic isoforms; the function is different from the established EJC assembly. Involved in craniofacial development.</text>
</comment>
<comment type="catalytic activity">
    <reaction evidence="1">
        <text>ATP + H2O = ADP + phosphate + H(+)</text>
        <dbReference type="Rhea" id="RHEA:13065"/>
        <dbReference type="ChEBI" id="CHEBI:15377"/>
        <dbReference type="ChEBI" id="CHEBI:15378"/>
        <dbReference type="ChEBI" id="CHEBI:30616"/>
        <dbReference type="ChEBI" id="CHEBI:43474"/>
        <dbReference type="ChEBI" id="CHEBI:456216"/>
        <dbReference type="EC" id="3.6.4.13"/>
    </reaction>
</comment>
<comment type="activity regulation">
    <text evidence="1">The ATPase activity is increased some 4-fold in the presence of RNA.</text>
</comment>
<comment type="subunit">
    <text evidence="1">Identified in the spliceosome C complex. Core component of the mRNA splicing-dependent exon junction complex (EJC); the core complex contains CASC3, EIF4A3, MAGOH or MAGOHB, and RBM8A.</text>
</comment>
<comment type="subcellular location">
    <subcellularLocation>
        <location evidence="6">Nucleus</location>
    </subcellularLocation>
    <subcellularLocation>
        <location evidence="1">Nucleus speckle</location>
    </subcellularLocation>
    <subcellularLocation>
        <location evidence="6">Cytoplasm</location>
    </subcellularLocation>
    <text evidence="6">Nucleocytoplasmic shuttling protein. Travels to the cytoplasm as part of the exon junction complex (EJC) bound to mRNA. Detected in dendritic layer as well as the nuclear and cytoplasmic (somatic) compartments of neurons. Colocalizes with STAU1 and FMR1 in dendrites.</text>
</comment>
<comment type="tissue specificity">
    <text>Expressed in the CA1 field and dentate gyrus of the hippocampus (at protein level).</text>
</comment>
<comment type="similarity">
    <text evidence="7">Belongs to the DEAD box helicase family. eIF4A subfamily.</text>
</comment>
<sequence>MAATATMATSGSARKRLLKEEDMTKVEFETSEEVDVTPTFDTMGLREDLLRGIYAYGFEKPSAIQQRAIKQIIKGRDVIAQSQSGTGKTATFSISVLQCLDIQVRETQALILAPTRELAVQIQKGLLALGDYMNVQCHACIGGTNVGEDIRKLDYGQHVVAGTPGRVFDMIRRRSLRTRAIKMLVLDEADEMLNKGFKEQIYDVYRYLPPATQVVLISATLPHEILEMTNKFMTDPIRILVKRDELTLEGIKQFFVAVEREEWKFDTLCDLYDTLTITQAVIFCNTKRKVDWLTEKMREANFTVSSMHGDMPQKERESIMKEFRSGASRVLISTDVWARGLDVPQVSLIINYDLPNNRELYIHRIGRSGRYGRKGVAINFVKNDDIRILRDIEQYYSTQIDEMPMNVADLI</sequence>
<reference key="1">
    <citation type="submission" date="2005-07" db="EMBL/GenBank/DDBJ databases">
        <authorList>
            <person name="Mural R.J."/>
            <person name="Adams M.D."/>
            <person name="Myers E.W."/>
            <person name="Smith H.O."/>
            <person name="Venter J.C."/>
        </authorList>
    </citation>
    <scope>NUCLEOTIDE SEQUENCE [LARGE SCALE GENOMIC DNA]</scope>
    <source>
        <strain>Brown Norway</strain>
    </source>
</reference>
<reference key="2">
    <citation type="journal article" date="2004" name="Genome Res.">
        <title>The status, quality, and expansion of the NIH full-length cDNA project: the Mammalian Gene Collection (MGC).</title>
        <authorList>
            <consortium name="The MGC Project Team"/>
        </authorList>
    </citation>
    <scope>NUCLEOTIDE SEQUENCE [LARGE SCALE MRNA]</scope>
    <source>
        <tissue>Kidney</tissue>
    </source>
</reference>
<reference key="3">
    <citation type="journal article" date="2007" name="Cell">
        <title>The EJC factor eIF4AIII modulates synaptic strength and neuronal protein expression.</title>
        <authorList>
            <person name="Giorgi C."/>
            <person name="Yeo G.W."/>
            <person name="Stone M.E."/>
            <person name="Katz D.B."/>
            <person name="Burge C."/>
            <person name="Turrigiano G."/>
            <person name="Moore M.J."/>
        </authorList>
    </citation>
    <scope>SUBCELLULAR LOCATION</scope>
</reference>
<evidence type="ECO:0000250" key="1">
    <source>
        <dbReference type="UniProtKB" id="P38919"/>
    </source>
</evidence>
<evidence type="ECO:0000250" key="2">
    <source>
        <dbReference type="UniProtKB" id="P60842"/>
    </source>
</evidence>
<evidence type="ECO:0000250" key="3">
    <source>
        <dbReference type="UniProtKB" id="P60843"/>
    </source>
</evidence>
<evidence type="ECO:0000255" key="4">
    <source>
        <dbReference type="PROSITE-ProRule" id="PRU00541"/>
    </source>
</evidence>
<evidence type="ECO:0000255" key="5">
    <source>
        <dbReference type="PROSITE-ProRule" id="PRU00542"/>
    </source>
</evidence>
<evidence type="ECO:0000269" key="6">
    <source>
    </source>
</evidence>
<evidence type="ECO:0000305" key="7"/>
<accession>Q3B8Q2</accession>
<proteinExistence type="evidence at protein level"/>